<accession>Q636I2</accession>
<feature type="chain" id="PRO_0000243772" description="Small ribosomal subunit protein bS16">
    <location>
        <begin position="1"/>
        <end position="90"/>
    </location>
</feature>
<reference key="1">
    <citation type="journal article" date="2006" name="J. Bacteriol.">
        <title>Pathogenomic sequence analysis of Bacillus cereus and Bacillus thuringiensis isolates closely related to Bacillus anthracis.</title>
        <authorList>
            <person name="Han C.S."/>
            <person name="Xie G."/>
            <person name="Challacombe J.F."/>
            <person name="Altherr M.R."/>
            <person name="Bhotika S.S."/>
            <person name="Bruce D."/>
            <person name="Campbell C.S."/>
            <person name="Campbell M.L."/>
            <person name="Chen J."/>
            <person name="Chertkov O."/>
            <person name="Cleland C."/>
            <person name="Dimitrijevic M."/>
            <person name="Doggett N.A."/>
            <person name="Fawcett J.J."/>
            <person name="Glavina T."/>
            <person name="Goodwin L.A."/>
            <person name="Hill K.K."/>
            <person name="Hitchcock P."/>
            <person name="Jackson P.J."/>
            <person name="Keim P."/>
            <person name="Kewalramani A.R."/>
            <person name="Longmire J."/>
            <person name="Lucas S."/>
            <person name="Malfatti S."/>
            <person name="McMurry K."/>
            <person name="Meincke L.J."/>
            <person name="Misra M."/>
            <person name="Moseman B.L."/>
            <person name="Mundt M."/>
            <person name="Munk A.C."/>
            <person name="Okinaka R.T."/>
            <person name="Parson-Quintana B."/>
            <person name="Reilly L.P."/>
            <person name="Richardson P."/>
            <person name="Robinson D.L."/>
            <person name="Rubin E."/>
            <person name="Saunders E."/>
            <person name="Tapia R."/>
            <person name="Tesmer J.G."/>
            <person name="Thayer N."/>
            <person name="Thompson L.S."/>
            <person name="Tice H."/>
            <person name="Ticknor L.O."/>
            <person name="Wills P.L."/>
            <person name="Brettin T.S."/>
            <person name="Gilna P."/>
        </authorList>
    </citation>
    <scope>NUCLEOTIDE SEQUENCE [LARGE SCALE GENOMIC DNA]</scope>
    <source>
        <strain>ZK / E33L</strain>
    </source>
</reference>
<proteinExistence type="inferred from homology"/>
<evidence type="ECO:0000255" key="1">
    <source>
        <dbReference type="HAMAP-Rule" id="MF_00385"/>
    </source>
</evidence>
<evidence type="ECO:0000305" key="2"/>
<keyword id="KW-0687">Ribonucleoprotein</keyword>
<keyword id="KW-0689">Ribosomal protein</keyword>
<protein>
    <recommendedName>
        <fullName evidence="1">Small ribosomal subunit protein bS16</fullName>
    </recommendedName>
    <alternativeName>
        <fullName evidence="2">30S ribosomal protein S16</fullName>
    </alternativeName>
</protein>
<comment type="similarity">
    <text evidence="1">Belongs to the bacterial ribosomal protein bS16 family.</text>
</comment>
<sequence length="90" mass="10118">MAVKIRLKRMGAKKTPFYRVVVADSRSPRDGRFIEEIGTYNPVAQPAEVKINEEAALKWLGNGAKPSDTVRNLFSNQGIMEKFHLSKQGK</sequence>
<dbReference type="EMBL" id="CP000001">
    <property type="protein sequence ID" value="AAU16664.1"/>
    <property type="molecule type" value="Genomic_DNA"/>
</dbReference>
<dbReference type="RefSeq" id="WP_000268750.1">
    <property type="nucleotide sequence ID" value="NZ_CP009968.1"/>
</dbReference>
<dbReference type="SMR" id="Q636I2"/>
<dbReference type="GeneID" id="93007268"/>
<dbReference type="KEGG" id="bcz:BCE33L3603"/>
<dbReference type="PATRIC" id="fig|288681.22.peg.1808"/>
<dbReference type="Proteomes" id="UP000002612">
    <property type="component" value="Chromosome"/>
</dbReference>
<dbReference type="GO" id="GO:0005737">
    <property type="term" value="C:cytoplasm"/>
    <property type="evidence" value="ECO:0007669"/>
    <property type="project" value="UniProtKB-ARBA"/>
</dbReference>
<dbReference type="GO" id="GO:0015935">
    <property type="term" value="C:small ribosomal subunit"/>
    <property type="evidence" value="ECO:0007669"/>
    <property type="project" value="TreeGrafter"/>
</dbReference>
<dbReference type="GO" id="GO:0003735">
    <property type="term" value="F:structural constituent of ribosome"/>
    <property type="evidence" value="ECO:0007669"/>
    <property type="project" value="InterPro"/>
</dbReference>
<dbReference type="GO" id="GO:0006412">
    <property type="term" value="P:translation"/>
    <property type="evidence" value="ECO:0007669"/>
    <property type="project" value="UniProtKB-UniRule"/>
</dbReference>
<dbReference type="FunFam" id="3.30.1320.10:FF:000002">
    <property type="entry name" value="30S ribosomal protein S16"/>
    <property type="match status" value="1"/>
</dbReference>
<dbReference type="Gene3D" id="3.30.1320.10">
    <property type="match status" value="1"/>
</dbReference>
<dbReference type="HAMAP" id="MF_00385">
    <property type="entry name" value="Ribosomal_bS16"/>
    <property type="match status" value="1"/>
</dbReference>
<dbReference type="InterPro" id="IPR000307">
    <property type="entry name" value="Ribosomal_bS16"/>
</dbReference>
<dbReference type="InterPro" id="IPR020592">
    <property type="entry name" value="Ribosomal_bS16_CS"/>
</dbReference>
<dbReference type="InterPro" id="IPR023803">
    <property type="entry name" value="Ribosomal_bS16_dom_sf"/>
</dbReference>
<dbReference type="NCBIfam" id="TIGR00002">
    <property type="entry name" value="S16"/>
    <property type="match status" value="1"/>
</dbReference>
<dbReference type="PANTHER" id="PTHR12919">
    <property type="entry name" value="30S RIBOSOMAL PROTEIN S16"/>
    <property type="match status" value="1"/>
</dbReference>
<dbReference type="PANTHER" id="PTHR12919:SF20">
    <property type="entry name" value="SMALL RIBOSOMAL SUBUNIT PROTEIN BS16M"/>
    <property type="match status" value="1"/>
</dbReference>
<dbReference type="Pfam" id="PF00886">
    <property type="entry name" value="Ribosomal_S16"/>
    <property type="match status" value="1"/>
</dbReference>
<dbReference type="SUPFAM" id="SSF54565">
    <property type="entry name" value="Ribosomal protein S16"/>
    <property type="match status" value="1"/>
</dbReference>
<dbReference type="PROSITE" id="PS00732">
    <property type="entry name" value="RIBOSOMAL_S16"/>
    <property type="match status" value="1"/>
</dbReference>
<organism>
    <name type="scientific">Bacillus cereus (strain ZK / E33L)</name>
    <dbReference type="NCBI Taxonomy" id="288681"/>
    <lineage>
        <taxon>Bacteria</taxon>
        <taxon>Bacillati</taxon>
        <taxon>Bacillota</taxon>
        <taxon>Bacilli</taxon>
        <taxon>Bacillales</taxon>
        <taxon>Bacillaceae</taxon>
        <taxon>Bacillus</taxon>
        <taxon>Bacillus cereus group</taxon>
    </lineage>
</organism>
<gene>
    <name evidence="1" type="primary">rpsP</name>
    <name type="ordered locus">BCE33L3603</name>
</gene>
<name>RS16_BACCZ</name>